<gene>
    <name evidence="1" type="primary">lgt</name>
    <name type="ordered locus">SeAg_B3149</name>
</gene>
<proteinExistence type="inferred from homology"/>
<sequence length="291" mass="33075">MTSSYLHFPDFDPVIFSIGPVALHWYGLMYLVGFVFAMWLAVRRANRPGSGWTKNEVENLLYAGFLGVFLGGRIGYVLFYNFPLFLDNPLYLFRVWDGGMSFHGGLIGVILVMIIFARRTKRSFFQVSDFIAPLIPFGLGAGRLGNFINGELWGRVDPDFRFAMLFPGSRAEDIALLPSHPQWQPIFDTYGVLPRHPSQLYELALEGVVLFIILNLFIRKPRPMGAVSGLFLIGYGAFRIIVEFFRQPDAQFTGAWVQYISMGQILSIPMIIAGAIMMVWAYRRRPQQHVS</sequence>
<name>LGT_SALA4</name>
<dbReference type="EC" id="2.5.1.145" evidence="1"/>
<dbReference type="EMBL" id="CP001138">
    <property type="protein sequence ID" value="ACH51743.1"/>
    <property type="molecule type" value="Genomic_DNA"/>
</dbReference>
<dbReference type="RefSeq" id="WP_000204645.1">
    <property type="nucleotide sequence ID" value="NC_011149.1"/>
</dbReference>
<dbReference type="SMR" id="B5F4U6"/>
<dbReference type="KEGG" id="sea:SeAg_B3149"/>
<dbReference type="HOGENOM" id="CLU_013386_1_0_6"/>
<dbReference type="UniPathway" id="UPA00664"/>
<dbReference type="Proteomes" id="UP000008819">
    <property type="component" value="Chromosome"/>
</dbReference>
<dbReference type="GO" id="GO:0005886">
    <property type="term" value="C:plasma membrane"/>
    <property type="evidence" value="ECO:0007669"/>
    <property type="project" value="UniProtKB-SubCell"/>
</dbReference>
<dbReference type="GO" id="GO:0008961">
    <property type="term" value="F:phosphatidylglycerol-prolipoprotein diacylglyceryl transferase activity"/>
    <property type="evidence" value="ECO:0007669"/>
    <property type="project" value="UniProtKB-UniRule"/>
</dbReference>
<dbReference type="GO" id="GO:0042158">
    <property type="term" value="P:lipoprotein biosynthetic process"/>
    <property type="evidence" value="ECO:0007669"/>
    <property type="project" value="UniProtKB-UniRule"/>
</dbReference>
<dbReference type="HAMAP" id="MF_01147">
    <property type="entry name" value="Lgt"/>
    <property type="match status" value="1"/>
</dbReference>
<dbReference type="InterPro" id="IPR001640">
    <property type="entry name" value="Lgt"/>
</dbReference>
<dbReference type="NCBIfam" id="TIGR00544">
    <property type="entry name" value="lgt"/>
    <property type="match status" value="1"/>
</dbReference>
<dbReference type="PANTHER" id="PTHR30589:SF0">
    <property type="entry name" value="PHOSPHATIDYLGLYCEROL--PROLIPOPROTEIN DIACYLGLYCERYL TRANSFERASE"/>
    <property type="match status" value="1"/>
</dbReference>
<dbReference type="PANTHER" id="PTHR30589">
    <property type="entry name" value="PROLIPOPROTEIN DIACYLGLYCERYL TRANSFERASE"/>
    <property type="match status" value="1"/>
</dbReference>
<dbReference type="Pfam" id="PF01790">
    <property type="entry name" value="LGT"/>
    <property type="match status" value="1"/>
</dbReference>
<dbReference type="PROSITE" id="PS01311">
    <property type="entry name" value="LGT"/>
    <property type="match status" value="1"/>
</dbReference>
<organism>
    <name type="scientific">Salmonella agona (strain SL483)</name>
    <dbReference type="NCBI Taxonomy" id="454166"/>
    <lineage>
        <taxon>Bacteria</taxon>
        <taxon>Pseudomonadati</taxon>
        <taxon>Pseudomonadota</taxon>
        <taxon>Gammaproteobacteria</taxon>
        <taxon>Enterobacterales</taxon>
        <taxon>Enterobacteriaceae</taxon>
        <taxon>Salmonella</taxon>
    </lineage>
</organism>
<evidence type="ECO:0000255" key="1">
    <source>
        <dbReference type="HAMAP-Rule" id="MF_01147"/>
    </source>
</evidence>
<reference key="1">
    <citation type="journal article" date="2011" name="J. Bacteriol.">
        <title>Comparative genomics of 28 Salmonella enterica isolates: evidence for CRISPR-mediated adaptive sublineage evolution.</title>
        <authorList>
            <person name="Fricke W.F."/>
            <person name="Mammel M.K."/>
            <person name="McDermott P.F."/>
            <person name="Tartera C."/>
            <person name="White D.G."/>
            <person name="Leclerc J.E."/>
            <person name="Ravel J."/>
            <person name="Cebula T.A."/>
        </authorList>
    </citation>
    <scope>NUCLEOTIDE SEQUENCE [LARGE SCALE GENOMIC DNA]</scope>
    <source>
        <strain>SL483</strain>
    </source>
</reference>
<keyword id="KW-0997">Cell inner membrane</keyword>
<keyword id="KW-1003">Cell membrane</keyword>
<keyword id="KW-0472">Membrane</keyword>
<keyword id="KW-0808">Transferase</keyword>
<keyword id="KW-0812">Transmembrane</keyword>
<keyword id="KW-1133">Transmembrane helix</keyword>
<accession>B5F4U6</accession>
<protein>
    <recommendedName>
        <fullName evidence="1">Phosphatidylglycerol--prolipoprotein diacylglyceryl transferase</fullName>
        <ecNumber evidence="1">2.5.1.145</ecNumber>
    </recommendedName>
</protein>
<comment type="function">
    <text evidence="1">Catalyzes the transfer of the diacylglyceryl group from phosphatidylglycerol to the sulfhydryl group of the N-terminal cysteine of a prolipoprotein, the first step in the formation of mature lipoproteins.</text>
</comment>
<comment type="catalytic activity">
    <reaction evidence="1">
        <text>L-cysteinyl-[prolipoprotein] + a 1,2-diacyl-sn-glycero-3-phospho-(1'-sn-glycerol) = an S-1,2-diacyl-sn-glyceryl-L-cysteinyl-[prolipoprotein] + sn-glycerol 1-phosphate + H(+)</text>
        <dbReference type="Rhea" id="RHEA:56712"/>
        <dbReference type="Rhea" id="RHEA-COMP:14679"/>
        <dbReference type="Rhea" id="RHEA-COMP:14680"/>
        <dbReference type="ChEBI" id="CHEBI:15378"/>
        <dbReference type="ChEBI" id="CHEBI:29950"/>
        <dbReference type="ChEBI" id="CHEBI:57685"/>
        <dbReference type="ChEBI" id="CHEBI:64716"/>
        <dbReference type="ChEBI" id="CHEBI:140658"/>
        <dbReference type="EC" id="2.5.1.145"/>
    </reaction>
</comment>
<comment type="pathway">
    <text evidence="1">Protein modification; lipoprotein biosynthesis (diacylglyceryl transfer).</text>
</comment>
<comment type="subcellular location">
    <subcellularLocation>
        <location evidence="1">Cell inner membrane</location>
        <topology evidence="1">Multi-pass membrane protein</topology>
    </subcellularLocation>
</comment>
<comment type="similarity">
    <text evidence="1">Belongs to the Lgt family.</text>
</comment>
<feature type="chain" id="PRO_1000137451" description="Phosphatidylglycerol--prolipoprotein diacylglyceryl transferase">
    <location>
        <begin position="1"/>
        <end position="291"/>
    </location>
</feature>
<feature type="transmembrane region" description="Helical" evidence="1">
    <location>
        <begin position="21"/>
        <end position="41"/>
    </location>
</feature>
<feature type="transmembrane region" description="Helical" evidence="1">
    <location>
        <begin position="60"/>
        <end position="80"/>
    </location>
</feature>
<feature type="transmembrane region" description="Helical" evidence="1">
    <location>
        <begin position="96"/>
        <end position="116"/>
    </location>
</feature>
<feature type="transmembrane region" description="Helical" evidence="1">
    <location>
        <begin position="130"/>
        <end position="150"/>
    </location>
</feature>
<feature type="transmembrane region" description="Helical" evidence="1">
    <location>
        <begin position="198"/>
        <end position="218"/>
    </location>
</feature>
<feature type="transmembrane region" description="Helical" evidence="1">
    <location>
        <begin position="225"/>
        <end position="245"/>
    </location>
</feature>
<feature type="transmembrane region" description="Helical" evidence="1">
    <location>
        <begin position="260"/>
        <end position="280"/>
    </location>
</feature>
<feature type="binding site" evidence="1">
    <location>
        <position position="143"/>
    </location>
    <ligand>
        <name>a 1,2-diacyl-sn-glycero-3-phospho-(1'-sn-glycerol)</name>
        <dbReference type="ChEBI" id="CHEBI:64716"/>
    </ligand>
</feature>